<evidence type="ECO:0000250" key="1"/>
<evidence type="ECO:0000255" key="2"/>
<evidence type="ECO:0000269" key="3">
    <source>
    </source>
</evidence>
<evidence type="ECO:0000305" key="4"/>
<evidence type="ECO:0000312" key="5">
    <source>
        <dbReference type="FlyBase" id="FBgn0044050"/>
    </source>
</evidence>
<evidence type="ECO:0000312" key="6">
    <source>
        <dbReference type="Proteomes" id="UP000000803"/>
    </source>
</evidence>
<accession>Q9VT52</accession>
<keyword id="KW-0165">Cleavage on pair of basic residues</keyword>
<keyword id="KW-1015">Disulfide bond</keyword>
<keyword id="KW-1185">Reference proteome</keyword>
<keyword id="KW-0964">Secreted</keyword>
<keyword id="KW-0732">Signal</keyword>
<reference key="1">
    <citation type="journal article" date="2000" name="Science">
        <title>The genome sequence of Drosophila melanogaster.</title>
        <authorList>
            <person name="Adams M.D."/>
            <person name="Celniker S.E."/>
            <person name="Holt R.A."/>
            <person name="Evans C.A."/>
            <person name="Gocayne J.D."/>
            <person name="Amanatides P.G."/>
            <person name="Scherer S.E."/>
            <person name="Li P.W."/>
            <person name="Hoskins R.A."/>
            <person name="Galle R.F."/>
            <person name="George R.A."/>
            <person name="Lewis S.E."/>
            <person name="Richards S."/>
            <person name="Ashburner M."/>
            <person name="Henderson S.N."/>
            <person name="Sutton G.G."/>
            <person name="Wortman J.R."/>
            <person name="Yandell M.D."/>
            <person name="Zhang Q."/>
            <person name="Chen L.X."/>
            <person name="Brandon R.C."/>
            <person name="Rogers Y.-H.C."/>
            <person name="Blazej R.G."/>
            <person name="Champe M."/>
            <person name="Pfeiffer B.D."/>
            <person name="Wan K.H."/>
            <person name="Doyle C."/>
            <person name="Baxter E.G."/>
            <person name="Helt G."/>
            <person name="Nelson C.R."/>
            <person name="Miklos G.L.G."/>
            <person name="Abril J.F."/>
            <person name="Agbayani A."/>
            <person name="An H.-J."/>
            <person name="Andrews-Pfannkoch C."/>
            <person name="Baldwin D."/>
            <person name="Ballew R.M."/>
            <person name="Basu A."/>
            <person name="Baxendale J."/>
            <person name="Bayraktaroglu L."/>
            <person name="Beasley E.M."/>
            <person name="Beeson K.Y."/>
            <person name="Benos P.V."/>
            <person name="Berman B.P."/>
            <person name="Bhandari D."/>
            <person name="Bolshakov S."/>
            <person name="Borkova D."/>
            <person name="Botchan M.R."/>
            <person name="Bouck J."/>
            <person name="Brokstein P."/>
            <person name="Brottier P."/>
            <person name="Burtis K.C."/>
            <person name="Busam D.A."/>
            <person name="Butler H."/>
            <person name="Cadieu E."/>
            <person name="Center A."/>
            <person name="Chandra I."/>
            <person name="Cherry J.M."/>
            <person name="Cawley S."/>
            <person name="Dahlke C."/>
            <person name="Davenport L.B."/>
            <person name="Davies P."/>
            <person name="de Pablos B."/>
            <person name="Delcher A."/>
            <person name="Deng Z."/>
            <person name="Mays A.D."/>
            <person name="Dew I."/>
            <person name="Dietz S.M."/>
            <person name="Dodson K."/>
            <person name="Doup L.E."/>
            <person name="Downes M."/>
            <person name="Dugan-Rocha S."/>
            <person name="Dunkov B.C."/>
            <person name="Dunn P."/>
            <person name="Durbin K.J."/>
            <person name="Evangelista C.C."/>
            <person name="Ferraz C."/>
            <person name="Ferriera S."/>
            <person name="Fleischmann W."/>
            <person name="Fosler C."/>
            <person name="Gabrielian A.E."/>
            <person name="Garg N.S."/>
            <person name="Gelbart W.M."/>
            <person name="Glasser K."/>
            <person name="Glodek A."/>
            <person name="Gong F."/>
            <person name="Gorrell J.H."/>
            <person name="Gu Z."/>
            <person name="Guan P."/>
            <person name="Harris M."/>
            <person name="Harris N.L."/>
            <person name="Harvey D.A."/>
            <person name="Heiman T.J."/>
            <person name="Hernandez J.R."/>
            <person name="Houck J."/>
            <person name="Hostin D."/>
            <person name="Houston K.A."/>
            <person name="Howland T.J."/>
            <person name="Wei M.-H."/>
            <person name="Ibegwam C."/>
            <person name="Jalali M."/>
            <person name="Kalush F."/>
            <person name="Karpen G.H."/>
            <person name="Ke Z."/>
            <person name="Kennison J.A."/>
            <person name="Ketchum K.A."/>
            <person name="Kimmel B.E."/>
            <person name="Kodira C.D."/>
            <person name="Kraft C.L."/>
            <person name="Kravitz S."/>
            <person name="Kulp D."/>
            <person name="Lai Z."/>
            <person name="Lasko P."/>
            <person name="Lei Y."/>
            <person name="Levitsky A.A."/>
            <person name="Li J.H."/>
            <person name="Li Z."/>
            <person name="Liang Y."/>
            <person name="Lin X."/>
            <person name="Liu X."/>
            <person name="Mattei B."/>
            <person name="McIntosh T.C."/>
            <person name="McLeod M.P."/>
            <person name="McPherson D."/>
            <person name="Merkulov G."/>
            <person name="Milshina N.V."/>
            <person name="Mobarry C."/>
            <person name="Morris J."/>
            <person name="Moshrefi A."/>
            <person name="Mount S.M."/>
            <person name="Moy M."/>
            <person name="Murphy B."/>
            <person name="Murphy L."/>
            <person name="Muzny D.M."/>
            <person name="Nelson D.L."/>
            <person name="Nelson D.R."/>
            <person name="Nelson K.A."/>
            <person name="Nixon K."/>
            <person name="Nusskern D.R."/>
            <person name="Pacleb J.M."/>
            <person name="Palazzolo M."/>
            <person name="Pittman G.S."/>
            <person name="Pan S."/>
            <person name="Pollard J."/>
            <person name="Puri V."/>
            <person name="Reese M.G."/>
            <person name="Reinert K."/>
            <person name="Remington K."/>
            <person name="Saunders R.D.C."/>
            <person name="Scheeler F."/>
            <person name="Shen H."/>
            <person name="Shue B.C."/>
            <person name="Siden-Kiamos I."/>
            <person name="Simpson M."/>
            <person name="Skupski M.P."/>
            <person name="Smith T.J."/>
            <person name="Spier E."/>
            <person name="Spradling A.C."/>
            <person name="Stapleton M."/>
            <person name="Strong R."/>
            <person name="Sun E."/>
            <person name="Svirskas R."/>
            <person name="Tector C."/>
            <person name="Turner R."/>
            <person name="Venter E."/>
            <person name="Wang A.H."/>
            <person name="Wang X."/>
            <person name="Wang Z.-Y."/>
            <person name="Wassarman D.A."/>
            <person name="Weinstock G.M."/>
            <person name="Weissenbach J."/>
            <person name="Williams S.M."/>
            <person name="Woodage T."/>
            <person name="Worley K.C."/>
            <person name="Wu D."/>
            <person name="Yang S."/>
            <person name="Yao Q.A."/>
            <person name="Ye J."/>
            <person name="Yeh R.-F."/>
            <person name="Zaveri J.S."/>
            <person name="Zhan M."/>
            <person name="Zhang G."/>
            <person name="Zhao Q."/>
            <person name="Zheng L."/>
            <person name="Zheng X.H."/>
            <person name="Zhong F.N."/>
            <person name="Zhong W."/>
            <person name="Zhou X."/>
            <person name="Zhu S.C."/>
            <person name="Zhu X."/>
            <person name="Smith H.O."/>
            <person name="Gibbs R.A."/>
            <person name="Myers E.W."/>
            <person name="Rubin G.M."/>
            <person name="Venter J.C."/>
        </authorList>
    </citation>
    <scope>NUCLEOTIDE SEQUENCE [LARGE SCALE GENOMIC DNA]</scope>
    <source>
        <strain>Berkeley</strain>
    </source>
</reference>
<reference key="2">
    <citation type="journal article" date="2002" name="Genome Biol.">
        <title>Annotation of the Drosophila melanogaster euchromatic genome: a systematic review.</title>
        <authorList>
            <person name="Misra S."/>
            <person name="Crosby M.A."/>
            <person name="Mungall C.J."/>
            <person name="Matthews B.B."/>
            <person name="Campbell K.S."/>
            <person name="Hradecky P."/>
            <person name="Huang Y."/>
            <person name="Kaminker J.S."/>
            <person name="Millburn G.H."/>
            <person name="Prochnik S.E."/>
            <person name="Smith C.D."/>
            <person name="Tupy J.L."/>
            <person name="Whitfield E.J."/>
            <person name="Bayraktaroglu L."/>
            <person name="Berman B.P."/>
            <person name="Bettencourt B.R."/>
            <person name="Celniker S.E."/>
            <person name="de Grey A.D.N.J."/>
            <person name="Drysdale R.A."/>
            <person name="Harris N.L."/>
            <person name="Richter J."/>
            <person name="Russo S."/>
            <person name="Schroeder A.J."/>
            <person name="Shu S.Q."/>
            <person name="Stapleton M."/>
            <person name="Yamada C."/>
            <person name="Ashburner M."/>
            <person name="Gelbart W.M."/>
            <person name="Rubin G.M."/>
            <person name="Lewis S.E."/>
        </authorList>
    </citation>
    <scope>GENOME REANNOTATION</scope>
    <source>
        <strain>Berkeley</strain>
    </source>
</reference>
<reference key="3">
    <citation type="journal article" date="2001" name="Curr. Biol.">
        <title>An evolutionarily conserved function of the Drosophila insulin receptor and insulin-like peptides in growth control.</title>
        <authorList>
            <person name="Brogiolo W."/>
            <person name="Stocker H."/>
            <person name="Ikeya T."/>
            <person name="Rintelen F."/>
            <person name="Fernandez R."/>
            <person name="Hafen E."/>
        </authorList>
    </citation>
    <scope>IDENTIFICATION</scope>
    <scope>TISSUE SPECIFICITY</scope>
    <scope>DEVELOPMENTAL STAGE</scope>
</reference>
<protein>
    <recommendedName>
        <fullName evidence="5">Insulin-like peptide 3</fullName>
        <shortName>dILP3</shortName>
    </recommendedName>
    <alternativeName>
        <fullName>Insulin-related peptide 3</fullName>
    </alternativeName>
    <component>
        <recommendedName>
            <fullName>Insulin-like peptide 3 A chain</fullName>
        </recommendedName>
    </component>
    <component>
        <recommendedName>
            <fullName>Insulin-like peptide 3 B chain</fullName>
        </recommendedName>
    </component>
</protein>
<dbReference type="EMBL" id="AE014296">
    <property type="protein sequence ID" value="AAF50203.2"/>
    <property type="molecule type" value="Genomic_DNA"/>
</dbReference>
<dbReference type="RefSeq" id="NP_648360.2">
    <property type="nucleotide sequence ID" value="NM_140103.3"/>
</dbReference>
<dbReference type="BioGRID" id="64539">
    <property type="interactions" value="2"/>
</dbReference>
<dbReference type="FunCoup" id="Q9VT52">
    <property type="interactions" value="263"/>
</dbReference>
<dbReference type="STRING" id="7227.FBpp0076102"/>
<dbReference type="PaxDb" id="7227-FBpp0076102"/>
<dbReference type="DNASU" id="39151"/>
<dbReference type="EnsemblMetazoa" id="FBtr0076373">
    <property type="protein sequence ID" value="FBpp0076102"/>
    <property type="gene ID" value="FBgn0044050"/>
</dbReference>
<dbReference type="GeneID" id="39151"/>
<dbReference type="KEGG" id="dme:Dmel_CG14167"/>
<dbReference type="AGR" id="FB:FBgn0044050"/>
<dbReference type="CTD" id="39151"/>
<dbReference type="FlyBase" id="FBgn0044050">
    <property type="gene designation" value="Ilp3"/>
</dbReference>
<dbReference type="VEuPathDB" id="VectorBase:FBgn0044050"/>
<dbReference type="eggNOG" id="ENOG502S3FQ">
    <property type="taxonomic scope" value="Eukaryota"/>
</dbReference>
<dbReference type="HOGENOM" id="CLU_125164_0_1_1"/>
<dbReference type="InParanoid" id="Q9VT52"/>
<dbReference type="OMA" id="VYGFNAM"/>
<dbReference type="OrthoDB" id="10019596at2759"/>
<dbReference type="PhylomeDB" id="Q9VT52"/>
<dbReference type="Reactome" id="R-DME-110478">
    <property type="pathway name" value="Insulin signaling pathway"/>
</dbReference>
<dbReference type="SignaLink" id="Q9VT52"/>
<dbReference type="BioGRID-ORCS" id="39151">
    <property type="hits" value="0 hits in 1 CRISPR screen"/>
</dbReference>
<dbReference type="GenomeRNAi" id="39151"/>
<dbReference type="PRO" id="PR:Q9VT52"/>
<dbReference type="Proteomes" id="UP000000803">
    <property type="component" value="Chromosome 3L"/>
</dbReference>
<dbReference type="Bgee" id="FBgn0044050">
    <property type="expression patterns" value="Expressed in central nervous system and 17 other cell types or tissues"/>
</dbReference>
<dbReference type="ExpressionAtlas" id="Q9VT52">
    <property type="expression patterns" value="baseline and differential"/>
</dbReference>
<dbReference type="GO" id="GO:0005576">
    <property type="term" value="C:extracellular region"/>
    <property type="evidence" value="ECO:0000304"/>
    <property type="project" value="Reactome"/>
</dbReference>
<dbReference type="GO" id="GO:0005615">
    <property type="term" value="C:extracellular space"/>
    <property type="evidence" value="ECO:0000314"/>
    <property type="project" value="FlyBase"/>
</dbReference>
<dbReference type="GO" id="GO:0005179">
    <property type="term" value="F:hormone activity"/>
    <property type="evidence" value="ECO:0007669"/>
    <property type="project" value="InterPro"/>
</dbReference>
<dbReference type="GO" id="GO:0005158">
    <property type="term" value="F:insulin receptor binding"/>
    <property type="evidence" value="ECO:0000250"/>
    <property type="project" value="UniProtKB"/>
</dbReference>
<dbReference type="GO" id="GO:0060180">
    <property type="term" value="P:female mating behavior"/>
    <property type="evidence" value="ECO:0000315"/>
    <property type="project" value="FlyBase"/>
</dbReference>
<dbReference type="GO" id="GO:0008286">
    <property type="term" value="P:insulin receptor signaling pathway"/>
    <property type="evidence" value="ECO:0000315"/>
    <property type="project" value="FlyBase"/>
</dbReference>
<dbReference type="GO" id="GO:0045475">
    <property type="term" value="P:locomotor rhythm"/>
    <property type="evidence" value="ECO:0000315"/>
    <property type="project" value="FlyBase"/>
</dbReference>
<dbReference type="GO" id="GO:0061964">
    <property type="term" value="P:negative regulation of entry into reproductive diapause"/>
    <property type="evidence" value="ECO:0000315"/>
    <property type="project" value="FlyBase"/>
</dbReference>
<dbReference type="GO" id="GO:0009743">
    <property type="term" value="P:response to carbohydrate"/>
    <property type="evidence" value="ECO:0000270"/>
    <property type="project" value="FlyBase"/>
</dbReference>
<dbReference type="GO" id="GO:0030431">
    <property type="term" value="P:sleep"/>
    <property type="evidence" value="ECO:0000315"/>
    <property type="project" value="FlyBase"/>
</dbReference>
<dbReference type="CDD" id="cd04366">
    <property type="entry name" value="IlGF_insulin_bombyxin_like"/>
    <property type="match status" value="1"/>
</dbReference>
<dbReference type="FunFam" id="1.10.100.10:FF:000010">
    <property type="entry name" value="GM24840"/>
    <property type="match status" value="1"/>
</dbReference>
<dbReference type="Gene3D" id="1.10.100.10">
    <property type="entry name" value="Insulin-like"/>
    <property type="match status" value="1"/>
</dbReference>
<dbReference type="InterPro" id="IPR016179">
    <property type="entry name" value="Insulin-like"/>
</dbReference>
<dbReference type="InterPro" id="IPR036438">
    <property type="entry name" value="Insulin-like_sf"/>
</dbReference>
<dbReference type="InterPro" id="IPR022353">
    <property type="entry name" value="Insulin_CS"/>
</dbReference>
<dbReference type="InterPro" id="IPR022352">
    <property type="entry name" value="Insulin_family"/>
</dbReference>
<dbReference type="PANTHER" id="PTHR13647:SF4">
    <property type="entry name" value="INSULIN-LIKE PEPTIDE 1-RELATED"/>
    <property type="match status" value="1"/>
</dbReference>
<dbReference type="PANTHER" id="PTHR13647">
    <property type="entry name" value="INSULIN-LIKE PEPTIDE 2-RELATED"/>
    <property type="match status" value="1"/>
</dbReference>
<dbReference type="Pfam" id="PF00049">
    <property type="entry name" value="Insulin"/>
    <property type="match status" value="1"/>
</dbReference>
<dbReference type="PRINTS" id="PR00276">
    <property type="entry name" value="INSULINFAMLY"/>
</dbReference>
<dbReference type="SMART" id="SM00078">
    <property type="entry name" value="IlGF"/>
    <property type="match status" value="1"/>
</dbReference>
<dbReference type="SUPFAM" id="SSF56994">
    <property type="entry name" value="Insulin-like"/>
    <property type="match status" value="1"/>
</dbReference>
<dbReference type="PROSITE" id="PS00262">
    <property type="entry name" value="INSULIN"/>
    <property type="match status" value="1"/>
</dbReference>
<feature type="signal peptide" evidence="2">
    <location>
        <begin position="1"/>
        <end position="29"/>
    </location>
</feature>
<feature type="chain" id="PRO_0000016193" description="Insulin-like peptide 3">
    <location>
        <begin position="30"/>
        <end position="120"/>
    </location>
</feature>
<feature type="peptide" id="PRO_0000016194" description="Insulin-like peptide 3 B chain" evidence="2">
    <location>
        <begin position="30"/>
        <end position="48"/>
    </location>
</feature>
<feature type="propeptide" id="PRO_0000016195" description="Connecting peptide" evidence="2">
    <location>
        <begin position="51"/>
        <end position="89"/>
    </location>
</feature>
<feature type="peptide" id="PRO_0000016196" description="Insulin-like peptide 3 A chain" evidence="2">
    <location>
        <begin position="92"/>
        <end position="120"/>
    </location>
</feature>
<feature type="disulfide bond" description="Interchain (between B and A chains)" evidence="1">
    <location>
        <begin position="34"/>
        <end position="101"/>
    </location>
</feature>
<feature type="disulfide bond" description="Interchain (between B and A chains)" evidence="1">
    <location>
        <begin position="46"/>
        <end position="114"/>
    </location>
</feature>
<feature type="disulfide bond" evidence="1">
    <location>
        <begin position="100"/>
        <end position="105"/>
    </location>
</feature>
<sequence length="120" mass="13708">MGIEMRCQDRRILLPSLLLLILMIGGVQATMKLCGRKLPETLSKLCVYGFNAMTKRTLDPVNFNQIDGFEDRSLLERLLSDSSVQMLKTRRLRDGVFDECCLKSCTMDEVLRYCAAKPRT</sequence>
<gene>
    <name evidence="5" type="primary">Ilp3</name>
    <name evidence="5" type="ORF">CG14167</name>
</gene>
<organism evidence="6">
    <name type="scientific">Drosophila melanogaster</name>
    <name type="common">Fruit fly</name>
    <dbReference type="NCBI Taxonomy" id="7227"/>
    <lineage>
        <taxon>Eukaryota</taxon>
        <taxon>Metazoa</taxon>
        <taxon>Ecdysozoa</taxon>
        <taxon>Arthropoda</taxon>
        <taxon>Hexapoda</taxon>
        <taxon>Insecta</taxon>
        <taxon>Pterygota</taxon>
        <taxon>Neoptera</taxon>
        <taxon>Endopterygota</taxon>
        <taxon>Diptera</taxon>
        <taxon>Brachycera</taxon>
        <taxon>Muscomorpha</taxon>
        <taxon>Ephydroidea</taxon>
        <taxon>Drosophilidae</taxon>
        <taxon>Drosophila</taxon>
        <taxon>Sophophora</taxon>
    </lineage>
</organism>
<proteinExistence type="evidence at transcript level"/>
<comment type="function">
    <text evidence="4">Possible ligand of InR/insulin-like receptor.</text>
</comment>
<comment type="subunit">
    <text evidence="1">Heterodimer of a B chain and an A chain linked by two disulfide bonds.</text>
</comment>
<comment type="subcellular location">
    <subcellularLocation>
        <location evidence="4">Secreted</location>
    </subcellularLocation>
</comment>
<comment type="tissue specificity">
    <text evidence="3">Expressed at a high level in seven cells of each larval brain hemisphere that may correspond to neurosecretory cells.</text>
</comment>
<comment type="developmental stage">
    <text evidence="3">Expressed in the larva, but not in the embryo.</text>
</comment>
<comment type="similarity">
    <text evidence="4">Belongs to the insulin family.</text>
</comment>
<name>INSL3_DROME</name>